<sequence length="297" mass="31470">MEINGVEIEDTFAEAFGIKVSRVLVTAATKKLAKIAATEATGYGTSVIGCPAEAGIDCYVPPEETPDGRPGYIIMICNPSKKSLDHELLERIGMGILTAPTTAVFDALDDEDEKLNIGFKLKFFGDGYEKELEIDGRKIHSIPIMSGDFLIESEFGIKDGVAGGNFFIMGDSQASALLAAQAAVDAIAAVEGTVTPFPGGVVASGSKVGSNKYKFLNASTNEKMCVTLKDEVEDTQIPENVNGVYEIVIDGVDEEAVREAMKEGIKAACTVPGIIKISAGNYGGNLGAYKIKLHDLF</sequence>
<name>FTR_METTH</name>
<comment type="function">
    <text evidence="1">Catalyzes the reversible transfer of a formyl group from formylmethanofuran (formyl-MFR) to tetrahydromethanopterin (H(4)MPT) to produce 5-formyl tetrahydromethanopterin (5-formyl-H(4)MPT) and methanofuran (MFR).</text>
</comment>
<comment type="catalytic activity">
    <reaction evidence="1">
        <text>N-formylmethanofuran + 5,6,7,8-tetrahydromethanopterin + H(+) = N(5)-formyl-5,6,7,8-tetrahydromethanopterin + methanofuran</text>
        <dbReference type="Rhea" id="RHEA:18061"/>
        <dbReference type="ChEBI" id="CHEBI:15378"/>
        <dbReference type="ChEBI" id="CHEBI:57727"/>
        <dbReference type="ChEBI" id="CHEBI:58018"/>
        <dbReference type="ChEBI" id="CHEBI:58103"/>
        <dbReference type="ChEBI" id="CHEBI:58151"/>
        <dbReference type="EC" id="2.3.1.101"/>
    </reaction>
</comment>
<comment type="pathway">
    <text evidence="1">One-carbon metabolism; methanogenesis from CO(2); 5,10-methenyl-5,6,7,8-tetrahydromethanopterin from CO(2): step 2/3.</text>
</comment>
<comment type="subunit">
    <text evidence="1">Homotetramer.</text>
</comment>
<comment type="subcellular location">
    <subcellularLocation>
        <location evidence="1">Cytoplasm</location>
    </subcellularLocation>
</comment>
<comment type="similarity">
    <text evidence="1">Belongs to the FTR family.</text>
</comment>
<comment type="sequence caution" evidence="2">
    <conflict type="erroneous initiation">
        <sequence resource="EMBL-CDS" id="AAB85748"/>
    </conflict>
    <text>Extended N-terminus.</text>
</comment>
<feature type="chain" id="PRO_0000138122" description="Formylmethanofuran--tetrahydromethanopterin formyltransferase">
    <location>
        <begin position="1"/>
        <end position="297"/>
    </location>
</feature>
<feature type="sequence conflict" description="In Ref. 1; AAA88222." evidence="2" ref="1">
    <location>
        <position position="28"/>
    </location>
</feature>
<feature type="sequence conflict" description="In Ref. 1; AAA88222." evidence="2" ref="1">
    <original>E</original>
    <variation>Q</variation>
    <location>
        <position position="154"/>
    </location>
</feature>
<organism>
    <name type="scientific">Methanothermobacter thermautotrophicus (strain ATCC 29096 / DSM 1053 / JCM 10044 / NBRC 100330 / Delta H)</name>
    <name type="common">Methanobacterium thermoautotrophicum</name>
    <dbReference type="NCBI Taxonomy" id="187420"/>
    <lineage>
        <taxon>Archaea</taxon>
        <taxon>Methanobacteriati</taxon>
        <taxon>Methanobacteriota</taxon>
        <taxon>Methanomada group</taxon>
        <taxon>Methanobacteria</taxon>
        <taxon>Methanobacteriales</taxon>
        <taxon>Methanobacteriaceae</taxon>
        <taxon>Methanothermobacter</taxon>
    </lineage>
</organism>
<proteinExistence type="evidence at protein level"/>
<reference key="1">
    <citation type="journal article" date="1990" name="J. Biol. Chem.">
        <title>The formylmethanofuran:tetrahydromethanopterin formyltransferase from Methanobacterium thermoautotrophicum delta H. Nucleotide sequence and functional expression of the cloned gene.</title>
        <authorList>
            <person name="Dimarco A.A."/>
            <person name="Sment K.A."/>
            <person name="Konisky J."/>
            <person name="Wolfe R.S."/>
        </authorList>
    </citation>
    <scope>NUCLEOTIDE SEQUENCE [GENOMIC DNA]</scope>
    <scope>PROTEIN SEQUENCE OF 1-61</scope>
    <source>
        <strain>ATCC 29096 / DSM 1053 / JCM 10044 / NBRC 100330 / Delta H</strain>
    </source>
</reference>
<reference key="2">
    <citation type="journal article" date="1997" name="J. Bacteriol.">
        <title>Complete genome sequence of Methanobacterium thermoautotrophicum deltaH: functional analysis and comparative genomics.</title>
        <authorList>
            <person name="Smith D.R."/>
            <person name="Doucette-Stamm L.A."/>
            <person name="Deloughery C."/>
            <person name="Lee H.-M."/>
            <person name="Dubois J."/>
            <person name="Aldredge T."/>
            <person name="Bashirzadeh R."/>
            <person name="Blakely D."/>
            <person name="Cook R."/>
            <person name="Gilbert K."/>
            <person name="Harrison D."/>
            <person name="Hoang L."/>
            <person name="Keagle P."/>
            <person name="Lumm W."/>
            <person name="Pothier B."/>
            <person name="Qiu D."/>
            <person name="Spadafora R."/>
            <person name="Vicare R."/>
            <person name="Wang Y."/>
            <person name="Wierzbowski J."/>
            <person name="Gibson R."/>
            <person name="Jiwani N."/>
            <person name="Caruso A."/>
            <person name="Bush D."/>
            <person name="Safer H."/>
            <person name="Patwell D."/>
            <person name="Prabhakar S."/>
            <person name="McDougall S."/>
            <person name="Shimer G."/>
            <person name="Goyal A."/>
            <person name="Pietrovski S."/>
            <person name="Church G.M."/>
            <person name="Daniels C.J."/>
            <person name="Mao J.-I."/>
            <person name="Rice P."/>
            <person name="Noelling J."/>
            <person name="Reeve J.N."/>
        </authorList>
    </citation>
    <scope>NUCLEOTIDE SEQUENCE [LARGE SCALE GENOMIC DNA]</scope>
    <source>
        <strain>ATCC 29096 / DSM 1053 / JCM 10044 / NBRC 100330 / Delta H</strain>
    </source>
</reference>
<evidence type="ECO:0000255" key="1">
    <source>
        <dbReference type="HAMAP-Rule" id="MF_00579"/>
    </source>
</evidence>
<evidence type="ECO:0000305" key="2"/>
<protein>
    <recommendedName>
        <fullName evidence="1">Formylmethanofuran--tetrahydromethanopterin formyltransferase</fullName>
        <shortName evidence="1">Ftr</shortName>
        <ecNumber evidence="1">2.3.1.101</ecNumber>
    </recommendedName>
    <alternativeName>
        <fullName evidence="1">H4MPT formyltransferase</fullName>
    </alternativeName>
</protein>
<accession>P21348</accession>
<accession>O27327</accession>
<keyword id="KW-0012">Acyltransferase</keyword>
<keyword id="KW-0963">Cytoplasm</keyword>
<keyword id="KW-0903">Direct protein sequencing</keyword>
<keyword id="KW-0484">Methanogenesis</keyword>
<keyword id="KW-0554">One-carbon metabolism</keyword>
<keyword id="KW-1185">Reference proteome</keyword>
<keyword id="KW-0808">Transferase</keyword>
<gene>
    <name evidence="1" type="primary">ftr</name>
    <name type="ordered locus">MTH_1259</name>
</gene>
<dbReference type="EC" id="2.3.1.101" evidence="1"/>
<dbReference type="EMBL" id="J05173">
    <property type="protein sequence ID" value="AAA88222.1"/>
    <property type="molecule type" value="Genomic_DNA"/>
</dbReference>
<dbReference type="EMBL" id="AE000666">
    <property type="protein sequence ID" value="AAB85748.1"/>
    <property type="status" value="ALT_INIT"/>
    <property type="molecule type" value="Genomic_DNA"/>
</dbReference>
<dbReference type="PIR" id="C69035">
    <property type="entry name" value="C69035"/>
</dbReference>
<dbReference type="RefSeq" id="WP_048061010.1">
    <property type="nucleotide sequence ID" value="NC_000916.1"/>
</dbReference>
<dbReference type="SMR" id="P21348"/>
<dbReference type="FunCoup" id="P21348">
    <property type="interactions" value="67"/>
</dbReference>
<dbReference type="STRING" id="187420.MTH_1259"/>
<dbReference type="PaxDb" id="187420-MTH_1259"/>
<dbReference type="EnsemblBacteria" id="AAB85748">
    <property type="protein sequence ID" value="AAB85748"/>
    <property type="gene ID" value="MTH_1259"/>
</dbReference>
<dbReference type="GeneID" id="1471667"/>
<dbReference type="KEGG" id="mth:MTH_1259"/>
<dbReference type="PATRIC" id="fig|187420.15.peg.1239"/>
<dbReference type="HOGENOM" id="CLU_081314_0_0_2"/>
<dbReference type="InParanoid" id="P21348"/>
<dbReference type="BRENDA" id="2.3.1.101">
    <property type="organism ID" value="3256"/>
</dbReference>
<dbReference type="UniPathway" id="UPA00640">
    <property type="reaction ID" value="UER00693"/>
</dbReference>
<dbReference type="Proteomes" id="UP000005223">
    <property type="component" value="Chromosome"/>
</dbReference>
<dbReference type="GO" id="GO:0005737">
    <property type="term" value="C:cytoplasm"/>
    <property type="evidence" value="ECO:0007669"/>
    <property type="project" value="UniProtKB-SubCell"/>
</dbReference>
<dbReference type="GO" id="GO:0030270">
    <property type="term" value="F:formylmethanofuran-tetrahydromethanopterin N-formyltransferase activity"/>
    <property type="evidence" value="ECO:0007669"/>
    <property type="project" value="UniProtKB-UniRule"/>
</dbReference>
<dbReference type="GO" id="GO:0019386">
    <property type="term" value="P:methanogenesis, from carbon dioxide"/>
    <property type="evidence" value="ECO:0007669"/>
    <property type="project" value="UniProtKB-UniRule"/>
</dbReference>
<dbReference type="GO" id="GO:0006730">
    <property type="term" value="P:one-carbon metabolic process"/>
    <property type="evidence" value="ECO:0007669"/>
    <property type="project" value="UniProtKB-UniRule"/>
</dbReference>
<dbReference type="Gene3D" id="3.30.70.520">
    <property type="match status" value="2"/>
</dbReference>
<dbReference type="HAMAP" id="MF_00579">
    <property type="entry name" value="FTR"/>
    <property type="match status" value="1"/>
</dbReference>
<dbReference type="InterPro" id="IPR014053">
    <property type="entry name" value="ForMFR_H4MPT_ForTrfase"/>
</dbReference>
<dbReference type="InterPro" id="IPR002770">
    <property type="entry name" value="ForMFR_H4MPT_ForTrfase_C"/>
</dbReference>
<dbReference type="InterPro" id="IPR023447">
    <property type="entry name" value="ForMFR_H4MPT_ForTrfase_fd-like"/>
</dbReference>
<dbReference type="InterPro" id="IPR022667">
    <property type="entry name" value="ForMFR_H4MPT_ForTrfase_N"/>
</dbReference>
<dbReference type="NCBIfam" id="TIGR03119">
    <property type="entry name" value="one_C_fhcD"/>
    <property type="match status" value="1"/>
</dbReference>
<dbReference type="NCBIfam" id="NF002554">
    <property type="entry name" value="PRK02114.1"/>
    <property type="match status" value="1"/>
</dbReference>
<dbReference type="Pfam" id="PF01913">
    <property type="entry name" value="FTR"/>
    <property type="match status" value="1"/>
</dbReference>
<dbReference type="Pfam" id="PF02741">
    <property type="entry name" value="FTR_C"/>
    <property type="match status" value="1"/>
</dbReference>
<dbReference type="PIRSF" id="PIRSF006414">
    <property type="entry name" value="Ftr_formyl_trnsf"/>
    <property type="match status" value="1"/>
</dbReference>
<dbReference type="SUPFAM" id="SSF55112">
    <property type="entry name" value="Formylmethanofuran:tetrahydromethanopterin formyltransferase"/>
    <property type="match status" value="2"/>
</dbReference>